<name>RH1_ARATH</name>
<evidence type="ECO:0000255" key="1">
    <source>
        <dbReference type="PROSITE-ProRule" id="PRU00541"/>
    </source>
</evidence>
<evidence type="ECO:0000255" key="2">
    <source>
        <dbReference type="PROSITE-ProRule" id="PRU00542"/>
    </source>
</evidence>
<evidence type="ECO:0000256" key="3">
    <source>
        <dbReference type="SAM" id="MobiDB-lite"/>
    </source>
</evidence>
<evidence type="ECO:0000305" key="4"/>
<reference key="1">
    <citation type="journal article" date="1998" name="Nature">
        <title>Analysis of 1.9 Mb of contiguous sequence from chromosome 4 of Arabidopsis thaliana.</title>
        <authorList>
            <person name="Bevan M."/>
            <person name="Bancroft I."/>
            <person name="Bent E."/>
            <person name="Love K."/>
            <person name="Goodman H.M."/>
            <person name="Dean C."/>
            <person name="Bergkamp R."/>
            <person name="Dirkse W."/>
            <person name="van Staveren M."/>
            <person name="Stiekema W."/>
            <person name="Drost L."/>
            <person name="Ridley P."/>
            <person name="Hudson S.-A."/>
            <person name="Patel K."/>
            <person name="Murphy G."/>
            <person name="Piffanelli P."/>
            <person name="Wedler H."/>
            <person name="Wedler E."/>
            <person name="Wambutt R."/>
            <person name="Weitzenegger T."/>
            <person name="Pohl T."/>
            <person name="Terryn N."/>
            <person name="Gielen J."/>
            <person name="Villarroel R."/>
            <person name="De Clercq R."/>
            <person name="van Montagu M."/>
            <person name="Lecharny A."/>
            <person name="Aubourg S."/>
            <person name="Gy I."/>
            <person name="Kreis M."/>
            <person name="Lao N."/>
            <person name="Kavanagh T."/>
            <person name="Hempel S."/>
            <person name="Kotter P."/>
            <person name="Entian K.-D."/>
            <person name="Rieger M."/>
            <person name="Schaefer M."/>
            <person name="Funk B."/>
            <person name="Mueller-Auer S."/>
            <person name="Silvey M."/>
            <person name="James R."/>
            <person name="Monfort A."/>
            <person name="Pons A."/>
            <person name="Puigdomenech P."/>
            <person name="Douka A."/>
            <person name="Voukelatou E."/>
            <person name="Milioni D."/>
            <person name="Hatzopoulos P."/>
            <person name="Piravandi E."/>
            <person name="Obermaier B."/>
            <person name="Hilbert H."/>
            <person name="Duesterhoeft A."/>
            <person name="Moores T."/>
            <person name="Jones J.D.G."/>
            <person name="Eneva T."/>
            <person name="Palme K."/>
            <person name="Benes V."/>
            <person name="Rechmann S."/>
            <person name="Ansorge W."/>
            <person name="Cooke R."/>
            <person name="Berger C."/>
            <person name="Delseny M."/>
            <person name="Voet M."/>
            <person name="Volckaert G."/>
            <person name="Mewes H.-W."/>
            <person name="Klosterman S."/>
            <person name="Schueller C."/>
            <person name="Chalwatzis N."/>
        </authorList>
    </citation>
    <scope>NUCLEOTIDE SEQUENCE [LARGE SCALE GENOMIC DNA]</scope>
    <source>
        <strain>cv. Columbia</strain>
    </source>
</reference>
<reference key="2">
    <citation type="journal article" date="1999" name="Nature">
        <title>Sequence and analysis of chromosome 4 of the plant Arabidopsis thaliana.</title>
        <authorList>
            <person name="Mayer K.F.X."/>
            <person name="Schueller C."/>
            <person name="Wambutt R."/>
            <person name="Murphy G."/>
            <person name="Volckaert G."/>
            <person name="Pohl T."/>
            <person name="Duesterhoeft A."/>
            <person name="Stiekema W."/>
            <person name="Entian K.-D."/>
            <person name="Terryn N."/>
            <person name="Harris B."/>
            <person name="Ansorge W."/>
            <person name="Brandt P."/>
            <person name="Grivell L.A."/>
            <person name="Rieger M."/>
            <person name="Weichselgartner M."/>
            <person name="de Simone V."/>
            <person name="Obermaier B."/>
            <person name="Mache R."/>
            <person name="Mueller M."/>
            <person name="Kreis M."/>
            <person name="Delseny M."/>
            <person name="Puigdomenech P."/>
            <person name="Watson M."/>
            <person name="Schmidtheini T."/>
            <person name="Reichert B."/>
            <person name="Portetelle D."/>
            <person name="Perez-Alonso M."/>
            <person name="Boutry M."/>
            <person name="Bancroft I."/>
            <person name="Vos P."/>
            <person name="Hoheisel J."/>
            <person name="Zimmermann W."/>
            <person name="Wedler H."/>
            <person name="Ridley P."/>
            <person name="Langham S.-A."/>
            <person name="McCullagh B."/>
            <person name="Bilham L."/>
            <person name="Robben J."/>
            <person name="van der Schueren J."/>
            <person name="Grymonprez B."/>
            <person name="Chuang Y.-J."/>
            <person name="Vandenbussche F."/>
            <person name="Braeken M."/>
            <person name="Weltjens I."/>
            <person name="Voet M."/>
            <person name="Bastiaens I."/>
            <person name="Aert R."/>
            <person name="Defoor E."/>
            <person name="Weitzenegger T."/>
            <person name="Bothe G."/>
            <person name="Ramsperger U."/>
            <person name="Hilbert H."/>
            <person name="Braun M."/>
            <person name="Holzer E."/>
            <person name="Brandt A."/>
            <person name="Peters S."/>
            <person name="van Staveren M."/>
            <person name="Dirkse W."/>
            <person name="Mooijman P."/>
            <person name="Klein Lankhorst R."/>
            <person name="Rose M."/>
            <person name="Hauf J."/>
            <person name="Koetter P."/>
            <person name="Berneiser S."/>
            <person name="Hempel S."/>
            <person name="Feldpausch M."/>
            <person name="Lamberth S."/>
            <person name="Van den Daele H."/>
            <person name="De Keyser A."/>
            <person name="Buysshaert C."/>
            <person name="Gielen J."/>
            <person name="Villarroel R."/>
            <person name="De Clercq R."/>
            <person name="van Montagu M."/>
            <person name="Rogers J."/>
            <person name="Cronin A."/>
            <person name="Quail M.A."/>
            <person name="Bray-Allen S."/>
            <person name="Clark L."/>
            <person name="Doggett J."/>
            <person name="Hall S."/>
            <person name="Kay M."/>
            <person name="Lennard N."/>
            <person name="McLay K."/>
            <person name="Mayes R."/>
            <person name="Pettett A."/>
            <person name="Rajandream M.A."/>
            <person name="Lyne M."/>
            <person name="Benes V."/>
            <person name="Rechmann S."/>
            <person name="Borkova D."/>
            <person name="Bloecker H."/>
            <person name="Scharfe M."/>
            <person name="Grimm M."/>
            <person name="Loehnert T.-H."/>
            <person name="Dose S."/>
            <person name="de Haan M."/>
            <person name="Maarse A.C."/>
            <person name="Schaefer M."/>
            <person name="Mueller-Auer S."/>
            <person name="Gabel C."/>
            <person name="Fuchs M."/>
            <person name="Fartmann B."/>
            <person name="Granderath K."/>
            <person name="Dauner D."/>
            <person name="Herzl A."/>
            <person name="Neumann S."/>
            <person name="Argiriou A."/>
            <person name="Vitale D."/>
            <person name="Liguori R."/>
            <person name="Piravandi E."/>
            <person name="Massenet O."/>
            <person name="Quigley F."/>
            <person name="Clabauld G."/>
            <person name="Muendlein A."/>
            <person name="Felber R."/>
            <person name="Schnabl S."/>
            <person name="Hiller R."/>
            <person name="Schmidt W."/>
            <person name="Lecharny A."/>
            <person name="Aubourg S."/>
            <person name="Chefdor F."/>
            <person name="Cooke R."/>
            <person name="Berger C."/>
            <person name="Monfort A."/>
            <person name="Casacuberta E."/>
            <person name="Gibbons T."/>
            <person name="Weber N."/>
            <person name="Vandenbol M."/>
            <person name="Bargues M."/>
            <person name="Terol J."/>
            <person name="Torres A."/>
            <person name="Perez-Perez A."/>
            <person name="Purnelle B."/>
            <person name="Bent E."/>
            <person name="Johnson S."/>
            <person name="Tacon D."/>
            <person name="Jesse T."/>
            <person name="Heijnen L."/>
            <person name="Schwarz S."/>
            <person name="Scholler P."/>
            <person name="Heber S."/>
            <person name="Francs P."/>
            <person name="Bielke C."/>
            <person name="Frishman D."/>
            <person name="Haase D."/>
            <person name="Lemcke K."/>
            <person name="Mewes H.-W."/>
            <person name="Stocker S."/>
            <person name="Zaccaria P."/>
            <person name="Bevan M."/>
            <person name="Wilson R.K."/>
            <person name="de la Bastide M."/>
            <person name="Habermann K."/>
            <person name="Parnell L."/>
            <person name="Dedhia N."/>
            <person name="Gnoj L."/>
            <person name="Schutz K."/>
            <person name="Huang E."/>
            <person name="Spiegel L."/>
            <person name="Sekhon M."/>
            <person name="Murray J."/>
            <person name="Sheet P."/>
            <person name="Cordes M."/>
            <person name="Abu-Threideh J."/>
            <person name="Stoneking T."/>
            <person name="Kalicki J."/>
            <person name="Graves T."/>
            <person name="Harmon G."/>
            <person name="Edwards J."/>
            <person name="Latreille P."/>
            <person name="Courtney L."/>
            <person name="Cloud J."/>
            <person name="Abbott A."/>
            <person name="Scott K."/>
            <person name="Johnson D."/>
            <person name="Minx P."/>
            <person name="Bentley D."/>
            <person name="Fulton B."/>
            <person name="Miller N."/>
            <person name="Greco T."/>
            <person name="Kemp K."/>
            <person name="Kramer J."/>
            <person name="Fulton L."/>
            <person name="Mardis E."/>
            <person name="Dante M."/>
            <person name="Pepin K."/>
            <person name="Hillier L.W."/>
            <person name="Nelson J."/>
            <person name="Spieth J."/>
            <person name="Ryan E."/>
            <person name="Andrews S."/>
            <person name="Geisel C."/>
            <person name="Layman D."/>
            <person name="Du H."/>
            <person name="Ali J."/>
            <person name="Berghoff A."/>
            <person name="Jones K."/>
            <person name="Drone K."/>
            <person name="Cotton M."/>
            <person name="Joshu C."/>
            <person name="Antonoiu B."/>
            <person name="Zidanic M."/>
            <person name="Strong C."/>
            <person name="Sun H."/>
            <person name="Lamar B."/>
            <person name="Yordan C."/>
            <person name="Ma P."/>
            <person name="Zhong J."/>
            <person name="Preston R."/>
            <person name="Vil D."/>
            <person name="Shekher M."/>
            <person name="Matero A."/>
            <person name="Shah R."/>
            <person name="Swaby I.K."/>
            <person name="O'Shaughnessy A."/>
            <person name="Rodriguez M."/>
            <person name="Hoffman J."/>
            <person name="Till S."/>
            <person name="Granat S."/>
            <person name="Shohdy N."/>
            <person name="Hasegawa A."/>
            <person name="Hameed A."/>
            <person name="Lodhi M."/>
            <person name="Johnson A."/>
            <person name="Chen E."/>
            <person name="Marra M.A."/>
            <person name="Martienssen R."/>
            <person name="McCombie W.R."/>
        </authorList>
    </citation>
    <scope>NUCLEOTIDE SEQUENCE [LARGE SCALE GENOMIC DNA]</scope>
    <source>
        <strain>cv. Columbia</strain>
    </source>
</reference>
<reference key="3">
    <citation type="journal article" date="2017" name="Plant J.">
        <title>Araport11: a complete reannotation of the Arabidopsis thaliana reference genome.</title>
        <authorList>
            <person name="Cheng C.Y."/>
            <person name="Krishnakumar V."/>
            <person name="Chan A.P."/>
            <person name="Thibaud-Nissen F."/>
            <person name="Schobel S."/>
            <person name="Town C.D."/>
        </authorList>
    </citation>
    <scope>GENOME REANNOTATION</scope>
    <source>
        <strain>cv. Columbia</strain>
    </source>
</reference>
<reference key="4">
    <citation type="journal article" date="1997" name="Gene">
        <title>Structure, organization and putative function of the genes identified within a 23.9 kb fragment from Arabidopsis thaliana chromosome IV sequenced in the framework of the ESSA programme.</title>
        <authorList>
            <person name="Aubourg S."/>
            <person name="Takvorian A."/>
            <person name="Cheron A."/>
            <person name="Kreis M."/>
            <person name="Lecharny A."/>
        </authorList>
    </citation>
    <scope>NUCLEOTIDE SEQUENCE [GENOMIC DNA / MRNA] OF 73-522</scope>
    <source>
        <strain>cv. Columbia</strain>
    </source>
</reference>
<reference key="5">
    <citation type="journal article" date="2004" name="Plant Biotechnol. J.">
        <title>DEAD-box RNA helicases in Arabidopsis thaliana: establishing a link between quantitative expression, gene structure and evolution of a family of genes.</title>
        <authorList>
            <person name="Mingam A."/>
            <person name="Toffano-Nioche C."/>
            <person name="Brunaud V."/>
            <person name="Boudet N."/>
            <person name="Kreis M."/>
            <person name="Lecharny A."/>
        </authorList>
    </citation>
    <scope>GENE FAMILY</scope>
    <scope>NOMENCLATURE</scope>
</reference>
<reference key="6">
    <citation type="journal article" date="2013" name="PLoS ONE">
        <title>Genome-wide comparative in silico analysis of the RNA helicase gene family in Zea mays and Glycine max: a comparison with Arabidopsis and Oryza sativa.</title>
        <authorList>
            <person name="Xu R."/>
            <person name="Zhang S."/>
            <person name="Huang J."/>
            <person name="Zheng C."/>
        </authorList>
    </citation>
    <scope>GENE FAMILY</scope>
</reference>
<gene>
    <name type="primary">RH1</name>
    <name type="ordered locus">At4g15850</name>
    <name type="ORF">dl3965w</name>
    <name type="ORF">FCAALL.401</name>
</gene>
<comment type="catalytic activity">
    <reaction>
        <text>ATP + H2O = ADP + phosphate + H(+)</text>
        <dbReference type="Rhea" id="RHEA:13065"/>
        <dbReference type="ChEBI" id="CHEBI:15377"/>
        <dbReference type="ChEBI" id="CHEBI:15378"/>
        <dbReference type="ChEBI" id="CHEBI:30616"/>
        <dbReference type="ChEBI" id="CHEBI:43474"/>
        <dbReference type="ChEBI" id="CHEBI:456216"/>
        <dbReference type="EC" id="3.6.4.13"/>
    </reaction>
</comment>
<comment type="domain">
    <text>The Q motif is unique to and characteristic of the DEAD box family of RNA helicases and controls ATP binding and hydrolysis.</text>
</comment>
<comment type="similarity">
    <text evidence="4">Belongs to the DEAD box helicase family. DDX51/DBP6 subfamily.</text>
</comment>
<comment type="sequence caution" evidence="4">
    <conflict type="erroneous gene model prediction">
        <sequence resource="EMBL-CDS" id="CAA72069"/>
    </conflict>
</comment>
<comment type="sequence caution" evidence="4">
    <conflict type="erroneous gene model prediction">
        <sequence resource="EMBL-CDS" id="CAB45993"/>
    </conflict>
</comment>
<comment type="sequence caution" evidence="4">
    <conflict type="erroneous gene model prediction">
        <sequence resource="EMBL-CDS" id="CAB78627"/>
    </conflict>
</comment>
<accession>Q7FGZ2</accession>
<accession>O22679</accession>
<accession>O23251</accession>
<keyword id="KW-0067">ATP-binding</keyword>
<keyword id="KW-0347">Helicase</keyword>
<keyword id="KW-0378">Hydrolase</keyword>
<keyword id="KW-0547">Nucleotide-binding</keyword>
<keyword id="KW-1185">Reference proteome</keyword>
<keyword id="KW-0694">RNA-binding</keyword>
<proteinExistence type="evidence at transcript level"/>
<feature type="chain" id="PRO_0000239143" description="DEAD-box ATP-dependent RNA helicase 1">
    <location>
        <begin position="1"/>
        <end position="522"/>
    </location>
</feature>
<feature type="domain" description="Helicase ATP-binding" evidence="1">
    <location>
        <begin position="66"/>
        <end position="297"/>
    </location>
</feature>
<feature type="domain" description="Helicase C-terminal" evidence="2">
    <location>
        <begin position="325"/>
        <end position="475"/>
    </location>
</feature>
<feature type="region of interest" description="Disordered" evidence="3">
    <location>
        <begin position="490"/>
        <end position="522"/>
    </location>
</feature>
<feature type="short sequence motif" description="Q motif">
    <location>
        <begin position="30"/>
        <end position="59"/>
    </location>
</feature>
<feature type="short sequence motif" description="DEAD box">
    <location>
        <begin position="207"/>
        <end position="210"/>
    </location>
</feature>
<feature type="compositionally biased region" description="Basic residues" evidence="3">
    <location>
        <begin position="497"/>
        <end position="506"/>
    </location>
</feature>
<feature type="binding site" evidence="1">
    <location>
        <begin position="79"/>
        <end position="86"/>
    </location>
    <ligand>
        <name>ATP</name>
        <dbReference type="ChEBI" id="CHEBI:30616"/>
    </ligand>
</feature>
<feature type="sequence conflict" description="In Ref. 4; CAA72041." evidence="4" ref="4">
    <original>V</original>
    <variation>G</variation>
    <location>
        <position position="327"/>
    </location>
</feature>
<feature type="sequence conflict" description="In Ref. 4; CAA72041." evidence="4" ref="4">
    <original>V</original>
    <variation>G</variation>
    <location>
        <position position="345"/>
    </location>
</feature>
<feature type="sequence conflict" description="In Ref. 4; CAA72041." evidence="4" ref="4">
    <original>E</original>
    <variation>K</variation>
    <location>
        <position position="455"/>
    </location>
</feature>
<sequence>MGRDKEDKTEMDSVVPWMRAPVDVSNVENCALDTLPCLNPKLKKALENMGISSLFPVQVAVWHETIGPGGFERDICVNSPTGSGKTLSYALPIVQLLASRPVRCLRALVVLPTRDLALQVKDVFDAIAPAVGLSVGSAVGQSSIAGEISQLIKTPKLDAGICYDPDDLSQNLESAVDILVATPGRLMDHINNTKGFTLEHLRYLVVDETDRLLREAYQSWLPTVLQLTQTSDDSLFPSFTPFVPSAFGSLQTVRRQSVERGFKGKPYPRLVKMVLSATLTQDPSKLIQLDLHHPLFMTTGGSRYRLPEKLECLRLICETGMKPVYLVALLKSWEGEKCIIFTSSVETTRRLCKLLNFFGDPKIKAKEYSGGLNQSLRSKELKAFRKGDIQVLVASDALTRGMDVKGVTNVINYDMPPFAKTFIHRAGRTARAGQAGRCFTLLSNHEVRRFSKLLEKVGSDSCPIYPIPPTSLDSIRATYTPALEKLKELVESEAPKKGRQAFRHNSRTGNSQTKLNKPRSEA</sequence>
<dbReference type="EC" id="3.6.4.13"/>
<dbReference type="EMBL" id="Z97339">
    <property type="protein sequence ID" value="CAB45993.1"/>
    <property type="status" value="ALT_SEQ"/>
    <property type="molecule type" value="Genomic_DNA"/>
</dbReference>
<dbReference type="EMBL" id="AL161542">
    <property type="protein sequence ID" value="CAB78627.1"/>
    <property type="status" value="ALT_SEQ"/>
    <property type="molecule type" value="Genomic_DNA"/>
</dbReference>
<dbReference type="EMBL" id="CP002687">
    <property type="protein sequence ID" value="AEE83659.1"/>
    <property type="molecule type" value="Genomic_DNA"/>
</dbReference>
<dbReference type="EMBL" id="Y11154">
    <property type="protein sequence ID" value="CAA72041.1"/>
    <property type="molecule type" value="mRNA"/>
</dbReference>
<dbReference type="EMBL" id="Y11187">
    <property type="protein sequence ID" value="CAA72069.1"/>
    <property type="status" value="ALT_SEQ"/>
    <property type="molecule type" value="Genomic_DNA"/>
</dbReference>
<dbReference type="PIR" id="A71424">
    <property type="entry name" value="A71424"/>
</dbReference>
<dbReference type="PIR" id="E85175">
    <property type="entry name" value="E85175"/>
</dbReference>
<dbReference type="RefSeq" id="NP_193320.6">
    <property type="nucleotide sequence ID" value="NM_117677.7"/>
</dbReference>
<dbReference type="SMR" id="Q7FGZ2"/>
<dbReference type="FunCoup" id="Q7FGZ2">
    <property type="interactions" value="4435"/>
</dbReference>
<dbReference type="STRING" id="3702.Q7FGZ2"/>
<dbReference type="PaxDb" id="3702-AT4G15850.1"/>
<dbReference type="ProteomicsDB" id="236864"/>
<dbReference type="EnsemblPlants" id="AT4G15850.1">
    <property type="protein sequence ID" value="AT4G15850.1"/>
    <property type="gene ID" value="AT4G15850"/>
</dbReference>
<dbReference type="GeneID" id="827266"/>
<dbReference type="Gramene" id="AT4G15850.1">
    <property type="protein sequence ID" value="AT4G15850.1"/>
    <property type="gene ID" value="AT4G15850"/>
</dbReference>
<dbReference type="KEGG" id="ath:AT4G15850"/>
<dbReference type="Araport" id="AT4G15850"/>
<dbReference type="TAIR" id="AT4G15850">
    <property type="gene designation" value="RH1"/>
</dbReference>
<dbReference type="eggNOG" id="KOG0350">
    <property type="taxonomic scope" value="Eukaryota"/>
</dbReference>
<dbReference type="HOGENOM" id="CLU_003041_15_3_1"/>
<dbReference type="InParanoid" id="Q7FGZ2"/>
<dbReference type="OMA" id="HEVKAFD"/>
<dbReference type="PRO" id="PR:Q7FGZ2"/>
<dbReference type="Proteomes" id="UP000006548">
    <property type="component" value="Chromosome 4"/>
</dbReference>
<dbReference type="ExpressionAtlas" id="Q7FGZ2">
    <property type="expression patterns" value="baseline and differential"/>
</dbReference>
<dbReference type="GO" id="GO:0005524">
    <property type="term" value="F:ATP binding"/>
    <property type="evidence" value="ECO:0007669"/>
    <property type="project" value="UniProtKB-KW"/>
</dbReference>
<dbReference type="GO" id="GO:0016887">
    <property type="term" value="F:ATP hydrolysis activity"/>
    <property type="evidence" value="ECO:0007669"/>
    <property type="project" value="RHEA"/>
</dbReference>
<dbReference type="GO" id="GO:0017151">
    <property type="term" value="F:DEAD/H-box RNA helicase binding"/>
    <property type="evidence" value="ECO:0000304"/>
    <property type="project" value="TAIR"/>
</dbReference>
<dbReference type="GO" id="GO:0003723">
    <property type="term" value="F:RNA binding"/>
    <property type="evidence" value="ECO:0007669"/>
    <property type="project" value="UniProtKB-KW"/>
</dbReference>
<dbReference type="GO" id="GO:0003724">
    <property type="term" value="F:RNA helicase activity"/>
    <property type="evidence" value="ECO:0007669"/>
    <property type="project" value="UniProtKB-EC"/>
</dbReference>
<dbReference type="CDD" id="cd17956">
    <property type="entry name" value="DEADc_DDX51"/>
    <property type="match status" value="1"/>
</dbReference>
<dbReference type="CDD" id="cd18787">
    <property type="entry name" value="SF2_C_DEAD"/>
    <property type="match status" value="1"/>
</dbReference>
<dbReference type="FunFam" id="3.40.50.300:FF:001539">
    <property type="entry name" value="ATP-dependent RNA helicase DDX51"/>
    <property type="match status" value="1"/>
</dbReference>
<dbReference type="Gene3D" id="3.40.50.300">
    <property type="entry name" value="P-loop containing nucleotide triphosphate hydrolases"/>
    <property type="match status" value="2"/>
</dbReference>
<dbReference type="InterPro" id="IPR011545">
    <property type="entry name" value="DEAD/DEAH_box_helicase_dom"/>
</dbReference>
<dbReference type="InterPro" id="IPR014001">
    <property type="entry name" value="Helicase_ATP-bd"/>
</dbReference>
<dbReference type="InterPro" id="IPR001650">
    <property type="entry name" value="Helicase_C-like"/>
</dbReference>
<dbReference type="InterPro" id="IPR027417">
    <property type="entry name" value="P-loop_NTPase"/>
</dbReference>
<dbReference type="PANTHER" id="PTHR24031">
    <property type="entry name" value="RNA HELICASE"/>
    <property type="match status" value="1"/>
</dbReference>
<dbReference type="Pfam" id="PF00270">
    <property type="entry name" value="DEAD"/>
    <property type="match status" value="1"/>
</dbReference>
<dbReference type="Pfam" id="PF00271">
    <property type="entry name" value="Helicase_C"/>
    <property type="match status" value="1"/>
</dbReference>
<dbReference type="SMART" id="SM00487">
    <property type="entry name" value="DEXDc"/>
    <property type="match status" value="1"/>
</dbReference>
<dbReference type="SMART" id="SM00490">
    <property type="entry name" value="HELICc"/>
    <property type="match status" value="1"/>
</dbReference>
<dbReference type="SUPFAM" id="SSF52540">
    <property type="entry name" value="P-loop containing nucleoside triphosphate hydrolases"/>
    <property type="match status" value="1"/>
</dbReference>
<dbReference type="PROSITE" id="PS51192">
    <property type="entry name" value="HELICASE_ATP_BIND_1"/>
    <property type="match status" value="1"/>
</dbReference>
<dbReference type="PROSITE" id="PS51194">
    <property type="entry name" value="HELICASE_CTER"/>
    <property type="match status" value="1"/>
</dbReference>
<protein>
    <recommendedName>
        <fullName>DEAD-box ATP-dependent RNA helicase 1</fullName>
        <ecNumber>3.6.4.13</ecNumber>
    </recommendedName>
</protein>
<organism>
    <name type="scientific">Arabidopsis thaliana</name>
    <name type="common">Mouse-ear cress</name>
    <dbReference type="NCBI Taxonomy" id="3702"/>
    <lineage>
        <taxon>Eukaryota</taxon>
        <taxon>Viridiplantae</taxon>
        <taxon>Streptophyta</taxon>
        <taxon>Embryophyta</taxon>
        <taxon>Tracheophyta</taxon>
        <taxon>Spermatophyta</taxon>
        <taxon>Magnoliopsida</taxon>
        <taxon>eudicotyledons</taxon>
        <taxon>Gunneridae</taxon>
        <taxon>Pentapetalae</taxon>
        <taxon>rosids</taxon>
        <taxon>malvids</taxon>
        <taxon>Brassicales</taxon>
        <taxon>Brassicaceae</taxon>
        <taxon>Camelineae</taxon>
        <taxon>Arabidopsis</taxon>
    </lineage>
</organism>